<feature type="chain" id="PRO_0000273044" description="RNA-binding protein 27">
    <location>
        <begin position="1"/>
        <end position="1060"/>
    </location>
</feature>
<feature type="domain" description="RRM" evidence="4">
    <location>
        <begin position="600"/>
        <end position="674"/>
    </location>
</feature>
<feature type="zinc finger region" description="C3H1-type" evidence="5">
    <location>
        <begin position="273"/>
        <end position="301"/>
    </location>
</feature>
<feature type="region of interest" description="Disordered" evidence="6">
    <location>
        <begin position="91"/>
        <end position="143"/>
    </location>
</feature>
<feature type="region of interest" description="Disordered" evidence="6">
    <location>
        <begin position="162"/>
        <end position="235"/>
    </location>
</feature>
<feature type="region of interest" description="Disordered" evidence="6">
    <location>
        <begin position="319"/>
        <end position="412"/>
    </location>
</feature>
<feature type="region of interest" description="Disordered" evidence="6">
    <location>
        <begin position="565"/>
        <end position="592"/>
    </location>
</feature>
<feature type="region of interest" description="Disordered" evidence="6">
    <location>
        <begin position="940"/>
        <end position="968"/>
    </location>
</feature>
<feature type="region of interest" description="Disordered" evidence="6">
    <location>
        <begin position="1006"/>
        <end position="1060"/>
    </location>
</feature>
<feature type="coiled-coil region" evidence="3">
    <location>
        <begin position="809"/>
        <end position="886"/>
    </location>
</feature>
<feature type="compositionally biased region" description="Basic and acidic residues" evidence="6">
    <location>
        <begin position="91"/>
        <end position="102"/>
    </location>
</feature>
<feature type="compositionally biased region" description="Basic and acidic residues" evidence="6">
    <location>
        <begin position="124"/>
        <end position="143"/>
    </location>
</feature>
<feature type="compositionally biased region" description="Basic residues" evidence="6">
    <location>
        <begin position="165"/>
        <end position="185"/>
    </location>
</feature>
<feature type="compositionally biased region" description="Basic and acidic residues" evidence="6">
    <location>
        <begin position="186"/>
        <end position="211"/>
    </location>
</feature>
<feature type="compositionally biased region" description="Polar residues" evidence="6">
    <location>
        <begin position="225"/>
        <end position="235"/>
    </location>
</feature>
<feature type="compositionally biased region" description="Pro residues" evidence="6">
    <location>
        <begin position="319"/>
        <end position="356"/>
    </location>
</feature>
<feature type="compositionally biased region" description="Pro residues" evidence="6">
    <location>
        <begin position="371"/>
        <end position="384"/>
    </location>
</feature>
<feature type="compositionally biased region" description="Polar residues" evidence="6">
    <location>
        <begin position="386"/>
        <end position="402"/>
    </location>
</feature>
<feature type="compositionally biased region" description="Low complexity" evidence="6">
    <location>
        <begin position="579"/>
        <end position="588"/>
    </location>
</feature>
<feature type="compositionally biased region" description="Acidic residues" evidence="6">
    <location>
        <begin position="1024"/>
        <end position="1053"/>
    </location>
</feature>
<feature type="modified residue" description="Phosphothreonine" evidence="10 11 13 14 16">
    <location>
        <position position="447"/>
    </location>
</feature>
<feature type="modified residue" description="Omega-N-methylarginine" evidence="15">
    <location>
        <position position="455"/>
    </location>
</feature>
<feature type="modified residue" description="Phosphoserine" evidence="2">
    <location>
        <position position="927"/>
    </location>
</feature>
<feature type="modified residue" description="Phosphoserine" evidence="14">
    <location>
        <position position="1012"/>
    </location>
</feature>
<feature type="modified residue" description="Phosphoserine" evidence="12">
    <location>
        <position position="1020"/>
    </location>
</feature>
<name>RBM27_HUMAN</name>
<gene>
    <name evidence="9" type="primary">RBM27</name>
    <name type="synonym">KIAA1311</name>
</gene>
<comment type="function">
    <text evidence="7">May be involved in the turnover of nuclear polyadenylated (pA+) RNA.</text>
</comment>
<comment type="subcellular location">
    <subcellularLocation>
        <location>Cytoplasm</location>
    </subcellularLocation>
    <subcellularLocation>
        <location>Nucleus speckle</location>
    </subcellularLocation>
    <text evidence="1">Incorporated into the nuclear speckles and to speckles proximal to the nuclear periphery. Also localizes to punctate structures in the cytoplasm termed cytospeckles (By similarity).</text>
</comment>
<comment type="domain">
    <text evidence="1">The RRM domain mediates integration into cytospeckles.</text>
</comment>
<accession>Q9P2N5</accession>
<accession>Q8IYW9</accession>
<protein>
    <recommendedName>
        <fullName evidence="8">RNA-binding protein 27</fullName>
    </recommendedName>
    <alternativeName>
        <fullName>RNA-binding motif protein 27</fullName>
    </alternativeName>
</protein>
<evidence type="ECO:0000250" key="1"/>
<evidence type="ECO:0000250" key="2">
    <source>
        <dbReference type="UniProtKB" id="Q5SFM8"/>
    </source>
</evidence>
<evidence type="ECO:0000255" key="3"/>
<evidence type="ECO:0000255" key="4">
    <source>
        <dbReference type="PROSITE-ProRule" id="PRU00176"/>
    </source>
</evidence>
<evidence type="ECO:0000255" key="5">
    <source>
        <dbReference type="PROSITE-ProRule" id="PRU00723"/>
    </source>
</evidence>
<evidence type="ECO:0000256" key="6">
    <source>
        <dbReference type="SAM" id="MobiDB-lite"/>
    </source>
</evidence>
<evidence type="ECO:0000269" key="7">
    <source>
    </source>
</evidence>
<evidence type="ECO:0000305" key="8"/>
<evidence type="ECO:0000312" key="9">
    <source>
        <dbReference type="HGNC" id="HGNC:29243"/>
    </source>
</evidence>
<evidence type="ECO:0007744" key="10">
    <source>
    </source>
</evidence>
<evidence type="ECO:0007744" key="11">
    <source>
    </source>
</evidence>
<evidence type="ECO:0007744" key="12">
    <source>
    </source>
</evidence>
<evidence type="ECO:0007744" key="13">
    <source>
    </source>
</evidence>
<evidence type="ECO:0007744" key="14">
    <source>
    </source>
</evidence>
<evidence type="ECO:0007744" key="15">
    <source>
    </source>
</evidence>
<evidence type="ECO:0007744" key="16">
    <source>
    </source>
</evidence>
<reference key="1">
    <citation type="journal article" date="2004" name="Nature">
        <title>The DNA sequence and comparative analysis of human chromosome 5.</title>
        <authorList>
            <person name="Schmutz J."/>
            <person name="Martin J."/>
            <person name="Terry A."/>
            <person name="Couronne O."/>
            <person name="Grimwood J."/>
            <person name="Lowry S."/>
            <person name="Gordon L.A."/>
            <person name="Scott D."/>
            <person name="Xie G."/>
            <person name="Huang W."/>
            <person name="Hellsten U."/>
            <person name="Tran-Gyamfi M."/>
            <person name="She X."/>
            <person name="Prabhakar S."/>
            <person name="Aerts A."/>
            <person name="Altherr M."/>
            <person name="Bajorek E."/>
            <person name="Black S."/>
            <person name="Branscomb E."/>
            <person name="Caoile C."/>
            <person name="Challacombe J.F."/>
            <person name="Chan Y.M."/>
            <person name="Denys M."/>
            <person name="Detter J.C."/>
            <person name="Escobar J."/>
            <person name="Flowers D."/>
            <person name="Fotopulos D."/>
            <person name="Glavina T."/>
            <person name="Gomez M."/>
            <person name="Gonzales E."/>
            <person name="Goodstein D."/>
            <person name="Grigoriev I."/>
            <person name="Groza M."/>
            <person name="Hammon N."/>
            <person name="Hawkins T."/>
            <person name="Haydu L."/>
            <person name="Israni S."/>
            <person name="Jett J."/>
            <person name="Kadner K."/>
            <person name="Kimball H."/>
            <person name="Kobayashi A."/>
            <person name="Lopez F."/>
            <person name="Lou Y."/>
            <person name="Martinez D."/>
            <person name="Medina C."/>
            <person name="Morgan J."/>
            <person name="Nandkeshwar R."/>
            <person name="Noonan J.P."/>
            <person name="Pitluck S."/>
            <person name="Pollard M."/>
            <person name="Predki P."/>
            <person name="Priest J."/>
            <person name="Ramirez L."/>
            <person name="Retterer J."/>
            <person name="Rodriguez A."/>
            <person name="Rogers S."/>
            <person name="Salamov A."/>
            <person name="Salazar A."/>
            <person name="Thayer N."/>
            <person name="Tice H."/>
            <person name="Tsai M."/>
            <person name="Ustaszewska A."/>
            <person name="Vo N."/>
            <person name="Wheeler J."/>
            <person name="Wu K."/>
            <person name="Yang J."/>
            <person name="Dickson M."/>
            <person name="Cheng J.-F."/>
            <person name="Eichler E.E."/>
            <person name="Olsen A."/>
            <person name="Pennacchio L.A."/>
            <person name="Rokhsar D.S."/>
            <person name="Richardson P."/>
            <person name="Lucas S.M."/>
            <person name="Myers R.M."/>
            <person name="Rubin E.M."/>
        </authorList>
    </citation>
    <scope>NUCLEOTIDE SEQUENCE [LARGE SCALE GENOMIC DNA]</scope>
</reference>
<reference key="2">
    <citation type="journal article" date="2000" name="DNA Res.">
        <title>Prediction of the coding sequences of unidentified human genes. XVI. The complete sequences of 150 new cDNA clones from brain which code for large proteins in vitro.</title>
        <authorList>
            <person name="Nagase T."/>
            <person name="Kikuno R."/>
            <person name="Ishikawa K."/>
            <person name="Hirosawa M."/>
            <person name="Ohara O."/>
        </authorList>
    </citation>
    <scope>NUCLEOTIDE SEQUENCE [LARGE SCALE MRNA] OF 172-1060</scope>
    <source>
        <tissue>Brain</tissue>
    </source>
</reference>
<reference key="3">
    <citation type="journal article" date="2004" name="Genome Res.">
        <title>The status, quality, and expansion of the NIH full-length cDNA project: the Mammalian Gene Collection (MGC).</title>
        <authorList>
            <consortium name="The MGC Project Team"/>
        </authorList>
    </citation>
    <scope>NUCLEOTIDE SEQUENCE [LARGE SCALE MRNA] OF 665-1060</scope>
    <source>
        <tissue>Cervix</tissue>
    </source>
</reference>
<reference key="4">
    <citation type="journal article" date="2006" name="Nat. Biotechnol.">
        <title>A probability-based approach for high-throughput protein phosphorylation analysis and site localization.</title>
        <authorList>
            <person name="Beausoleil S.A."/>
            <person name="Villen J."/>
            <person name="Gerber S.A."/>
            <person name="Rush J."/>
            <person name="Gygi S.P."/>
        </authorList>
    </citation>
    <scope>PHOSPHORYLATION [LARGE SCALE ANALYSIS] AT THR-447</scope>
    <scope>IDENTIFICATION BY MASS SPECTROMETRY [LARGE SCALE ANALYSIS]</scope>
    <source>
        <tissue>Cervix carcinoma</tissue>
    </source>
</reference>
<reference key="5">
    <citation type="journal article" date="2008" name="J. Proteome Res.">
        <title>Combining protein-based IMAC, peptide-based IMAC, and MudPIT for efficient phosphoproteomic analysis.</title>
        <authorList>
            <person name="Cantin G.T."/>
            <person name="Yi W."/>
            <person name="Lu B."/>
            <person name="Park S.K."/>
            <person name="Xu T."/>
            <person name="Lee J.-D."/>
            <person name="Yates J.R. III"/>
        </authorList>
    </citation>
    <scope>PHOSPHORYLATION [LARGE SCALE ANALYSIS] AT THR-447</scope>
    <scope>IDENTIFICATION BY MASS SPECTROMETRY [LARGE SCALE ANALYSIS]</scope>
    <source>
        <tissue>Cervix carcinoma</tissue>
    </source>
</reference>
<reference key="6">
    <citation type="journal article" date="2008" name="Proc. Natl. Acad. Sci. U.S.A.">
        <title>A quantitative atlas of mitotic phosphorylation.</title>
        <authorList>
            <person name="Dephoure N."/>
            <person name="Zhou C."/>
            <person name="Villen J."/>
            <person name="Beausoleil S.A."/>
            <person name="Bakalarski C.E."/>
            <person name="Elledge S.J."/>
            <person name="Gygi S.P."/>
        </authorList>
    </citation>
    <scope>PHOSPHORYLATION [LARGE SCALE ANALYSIS] AT SER-1020</scope>
    <scope>IDENTIFICATION BY MASS SPECTROMETRY [LARGE SCALE ANALYSIS]</scope>
    <source>
        <tissue>Cervix carcinoma</tissue>
    </source>
</reference>
<reference key="7">
    <citation type="journal article" date="2009" name="Sci. Signal.">
        <title>Quantitative phosphoproteomic analysis of T cell receptor signaling reveals system-wide modulation of protein-protein interactions.</title>
        <authorList>
            <person name="Mayya V."/>
            <person name="Lundgren D.H."/>
            <person name="Hwang S.-I."/>
            <person name="Rezaul K."/>
            <person name="Wu L."/>
            <person name="Eng J.K."/>
            <person name="Rodionov V."/>
            <person name="Han D.K."/>
        </authorList>
    </citation>
    <scope>IDENTIFICATION BY MASS SPECTROMETRY [LARGE SCALE ANALYSIS]</scope>
    <source>
        <tissue>Leukemic T-cell</tissue>
    </source>
</reference>
<reference key="8">
    <citation type="journal article" date="2010" name="Sci. Signal.">
        <title>Quantitative phosphoproteomics reveals widespread full phosphorylation site occupancy during mitosis.</title>
        <authorList>
            <person name="Olsen J.V."/>
            <person name="Vermeulen M."/>
            <person name="Santamaria A."/>
            <person name="Kumar C."/>
            <person name="Miller M.L."/>
            <person name="Jensen L.J."/>
            <person name="Gnad F."/>
            <person name="Cox J."/>
            <person name="Jensen T.S."/>
            <person name="Nigg E.A."/>
            <person name="Brunak S."/>
            <person name="Mann M."/>
        </authorList>
    </citation>
    <scope>PHOSPHORYLATION [LARGE SCALE ANALYSIS] AT THR-447</scope>
    <scope>IDENTIFICATION BY MASS SPECTROMETRY [LARGE SCALE ANALYSIS]</scope>
    <source>
        <tissue>Cervix carcinoma</tissue>
    </source>
</reference>
<reference key="9">
    <citation type="journal article" date="2011" name="BMC Syst. Biol.">
        <title>Initial characterization of the human central proteome.</title>
        <authorList>
            <person name="Burkard T.R."/>
            <person name="Planyavsky M."/>
            <person name="Kaupe I."/>
            <person name="Breitwieser F.P."/>
            <person name="Buerckstuemmer T."/>
            <person name="Bennett K.L."/>
            <person name="Superti-Furga G."/>
            <person name="Colinge J."/>
        </authorList>
    </citation>
    <scope>IDENTIFICATION BY MASS SPECTROMETRY [LARGE SCALE ANALYSIS]</scope>
</reference>
<reference key="10">
    <citation type="journal article" date="2011" name="Sci. Signal.">
        <title>System-wide temporal characterization of the proteome and phosphoproteome of human embryonic stem cell differentiation.</title>
        <authorList>
            <person name="Rigbolt K.T."/>
            <person name="Prokhorova T.A."/>
            <person name="Akimov V."/>
            <person name="Henningsen J."/>
            <person name="Johansen P.T."/>
            <person name="Kratchmarova I."/>
            <person name="Kassem M."/>
            <person name="Mann M."/>
            <person name="Olsen J.V."/>
            <person name="Blagoev B."/>
        </authorList>
    </citation>
    <scope>IDENTIFICATION BY MASS SPECTROMETRY [LARGE SCALE ANALYSIS]</scope>
</reference>
<reference key="11">
    <citation type="journal article" date="2013" name="J. Proteome Res.">
        <title>Toward a comprehensive characterization of a human cancer cell phosphoproteome.</title>
        <authorList>
            <person name="Zhou H."/>
            <person name="Di Palma S."/>
            <person name="Preisinger C."/>
            <person name="Peng M."/>
            <person name="Polat A.N."/>
            <person name="Heck A.J."/>
            <person name="Mohammed S."/>
        </authorList>
    </citation>
    <scope>PHOSPHORYLATION [LARGE SCALE ANALYSIS] AT THR-447 AND SER-1012</scope>
    <scope>IDENTIFICATION BY MASS SPECTROMETRY [LARGE SCALE ANALYSIS]</scope>
    <source>
        <tissue>Cervix carcinoma</tissue>
        <tissue>Erythroleukemia</tissue>
    </source>
</reference>
<reference key="12">
    <citation type="journal article" date="2014" name="J. Proteomics">
        <title>An enzyme assisted RP-RPLC approach for in-depth analysis of human liver phosphoproteome.</title>
        <authorList>
            <person name="Bian Y."/>
            <person name="Song C."/>
            <person name="Cheng K."/>
            <person name="Dong M."/>
            <person name="Wang F."/>
            <person name="Huang J."/>
            <person name="Sun D."/>
            <person name="Wang L."/>
            <person name="Ye M."/>
            <person name="Zou H."/>
        </authorList>
    </citation>
    <scope>PHOSPHORYLATION [LARGE SCALE ANALYSIS] AT THR-447</scope>
    <scope>IDENTIFICATION BY MASS SPECTROMETRY [LARGE SCALE ANALYSIS]</scope>
    <source>
        <tissue>Liver</tissue>
    </source>
</reference>
<reference key="13">
    <citation type="journal article" date="2014" name="Mol. Cell. Proteomics">
        <title>Immunoaffinity enrichment and mass spectrometry analysis of protein methylation.</title>
        <authorList>
            <person name="Guo A."/>
            <person name="Gu H."/>
            <person name="Zhou J."/>
            <person name="Mulhern D."/>
            <person name="Wang Y."/>
            <person name="Lee K.A."/>
            <person name="Yang V."/>
            <person name="Aguiar M."/>
            <person name="Kornhauser J."/>
            <person name="Jia X."/>
            <person name="Ren J."/>
            <person name="Beausoleil S.A."/>
            <person name="Silva J.C."/>
            <person name="Vemulapalli V."/>
            <person name="Bedford M.T."/>
            <person name="Comb M.J."/>
        </authorList>
    </citation>
    <scope>METHYLATION [LARGE SCALE ANALYSIS] AT ARG-455</scope>
    <scope>IDENTIFICATION BY MASS SPECTROMETRY [LARGE SCALE ANALYSIS]</scope>
    <source>
        <tissue>Colon carcinoma</tissue>
    </source>
</reference>
<reference key="14">
    <citation type="journal article" date="2020" name="Nucleic Acids Res.">
        <title>The human ZC3H3 and RBM26/27 proteins are critical for PAXT-mediated nuclear RNA decay.</title>
        <authorList>
            <person name="Silla T."/>
            <person name="Schmid M."/>
            <person name="Dou Y."/>
            <person name="Garland W."/>
            <person name="Milek M."/>
            <person name="Imami K."/>
            <person name="Johnsen D."/>
            <person name="Polak P."/>
            <person name="Andersen J.S."/>
            <person name="Selbach M."/>
            <person name="Landthaler M."/>
            <person name="Jensen T.H."/>
        </authorList>
    </citation>
    <scope>FUNCTION</scope>
</reference>
<organism>
    <name type="scientific">Homo sapiens</name>
    <name type="common">Human</name>
    <dbReference type="NCBI Taxonomy" id="9606"/>
    <lineage>
        <taxon>Eukaryota</taxon>
        <taxon>Metazoa</taxon>
        <taxon>Chordata</taxon>
        <taxon>Craniata</taxon>
        <taxon>Vertebrata</taxon>
        <taxon>Euteleostomi</taxon>
        <taxon>Mammalia</taxon>
        <taxon>Eutheria</taxon>
        <taxon>Euarchontoglires</taxon>
        <taxon>Primates</taxon>
        <taxon>Haplorrhini</taxon>
        <taxon>Catarrhini</taxon>
        <taxon>Hominidae</taxon>
        <taxon>Homo</taxon>
    </lineage>
</organism>
<proteinExistence type="evidence at protein level"/>
<sequence>MLIEDVDALKSWLAKLLEPICDADPSALANYVVALVKKDKPEKELKAFCADQLDVFLQKETSGFVDKLFESLYTKNYLPLLEPVKPEPKPLVQEKEEIKEEVFQEPAEEERDGRKKKYPSPQKTRSESSERRTREKKREDGKWRDYDRYYERNELYREKYDWRRGRSKSRSKSRGLSRSRSRSRGRSKDRDPNRNVEHRERSKFKSERNDLESSYVPVSAPPPNSSEQYSSGAQSIPSTVTVIAPAHHSENTTESWSNYYNNHSSSNSFGRNLPPKRRCRDYDERGFCVLGDLCQFDHGNDPLVVDEVALPSMIPFPPPPPGLPPPPPPGMLMPPMPGPGPGPGPGPGPGPGPGPGPGHSMRLPVPQGHGQPPPSVVLPIPRPPITQSSLINSRDQPGTSAVPNLASVGTRLPPPLPQNLLYTVSERQPMYSREHGAAASERLQLGTPPPLLAARLVPPRNLMGSSIGYHTSVSSPTPLVPDTYEPDGYNPEAPSITSSGRSQYRQFFSRTQTQRPNLIGLTSGDMDVNPRAANIVIQTEPPVPVSINSNITRVVLEPDSRKRAMSGLEGPLTKKPWLGKQGNNNQNKPGFLRKNQYTNTKLEVKKIPQELNNITKLNEHFSKFGTIVNIQVAFKGDPEAALIQYLTNEEARKAISSTEAVLNNRFIRVLWHRENNEQPTLQSSAQLLLQQQQTLSHLSQQHHHLPQHLHQQQVLVAQSAPSTVHGGIQKMMSKPQTSGAYVLNKVPVKHRLGHAGGNQSDASHLLNQSGGAGEDCQIFSTPGHPKMIYSSSNLKTPSKLCSGSKSHDVQEVLKKKQEAMKLQQDMRKKRQEVLEKQIECQKMLISKLEKNKNMKPEERANIMKTLKELGEKISQLKDELKTSSAVSTPSKVKTKTEAQKELLDTELDLHKRLSSGEDTTELRKKLSQLQVEAARLGILPVGRGKTMSSQGRGRGRGRGGRGRGSLNHMVVDHRPKALTVGGFIEEEKEDLLQHFSTANQGPKFKDRRLQISWHKPKVPSISTETEEEEVKEEETETSDLFLPDDDDEDEDEYESRSWRR</sequence>
<dbReference type="EMBL" id="AC091959">
    <property type="status" value="NOT_ANNOTATED_CDS"/>
    <property type="molecule type" value="Genomic_DNA"/>
</dbReference>
<dbReference type="EMBL" id="AB037732">
    <property type="protein sequence ID" value="BAA92549.1"/>
    <property type="molecule type" value="mRNA"/>
</dbReference>
<dbReference type="EMBL" id="BC033524">
    <property type="protein sequence ID" value="AAH33524.1"/>
    <property type="molecule type" value="mRNA"/>
</dbReference>
<dbReference type="CCDS" id="CCDS43378.1"/>
<dbReference type="RefSeq" id="NP_061862.1">
    <property type="nucleotide sequence ID" value="NM_018989.2"/>
</dbReference>
<dbReference type="SMR" id="Q9P2N5"/>
<dbReference type="BioGRID" id="119955">
    <property type="interactions" value="155"/>
</dbReference>
<dbReference type="ComplexPortal" id="CPX-2752">
    <property type="entry name" value="Poly(A) tail exosome targeting complex, RBM27 variant"/>
</dbReference>
<dbReference type="FunCoup" id="Q9P2N5">
    <property type="interactions" value="4436"/>
</dbReference>
<dbReference type="IntAct" id="Q9P2N5">
    <property type="interactions" value="96"/>
</dbReference>
<dbReference type="MINT" id="Q9P2N5"/>
<dbReference type="STRING" id="9606.ENSP00000265271"/>
<dbReference type="CarbonylDB" id="Q9P2N5"/>
<dbReference type="GlyConnect" id="2897">
    <property type="glycosylation" value="1 O-GlcNAc glycan (2 sites)"/>
</dbReference>
<dbReference type="GlyCosmos" id="Q9P2N5">
    <property type="glycosylation" value="11 sites, 2 glycans"/>
</dbReference>
<dbReference type="GlyGen" id="Q9P2N5">
    <property type="glycosylation" value="22 sites, 2 O-linked glycans (21 sites)"/>
</dbReference>
<dbReference type="iPTMnet" id="Q9P2N5"/>
<dbReference type="PhosphoSitePlus" id="Q9P2N5"/>
<dbReference type="SwissPalm" id="Q9P2N5"/>
<dbReference type="BioMuta" id="RBM27"/>
<dbReference type="DMDM" id="124021005"/>
<dbReference type="jPOST" id="Q9P2N5"/>
<dbReference type="MassIVE" id="Q9P2N5"/>
<dbReference type="PaxDb" id="9606-ENSP00000265271"/>
<dbReference type="PeptideAtlas" id="Q9P2N5"/>
<dbReference type="ProteomicsDB" id="83858"/>
<dbReference type="Pumba" id="Q9P2N5"/>
<dbReference type="Antibodypedia" id="27561">
    <property type="antibodies" value="37 antibodies from 10 providers"/>
</dbReference>
<dbReference type="DNASU" id="54439"/>
<dbReference type="Ensembl" id="ENST00000265271.7">
    <property type="protein sequence ID" value="ENSP00000265271.5"/>
    <property type="gene ID" value="ENSG00000091009.8"/>
</dbReference>
<dbReference type="GeneID" id="54439"/>
<dbReference type="KEGG" id="hsa:54439"/>
<dbReference type="MANE-Select" id="ENST00000265271.7">
    <property type="protein sequence ID" value="ENSP00000265271.5"/>
    <property type="RefSeq nucleotide sequence ID" value="NM_018989.2"/>
    <property type="RefSeq protein sequence ID" value="NP_061862.1"/>
</dbReference>
<dbReference type="UCSC" id="uc003lnz.5">
    <property type="organism name" value="human"/>
</dbReference>
<dbReference type="AGR" id="HGNC:29243"/>
<dbReference type="CTD" id="54439"/>
<dbReference type="DisGeNET" id="54439"/>
<dbReference type="GeneCards" id="RBM27"/>
<dbReference type="HGNC" id="HGNC:29243">
    <property type="gene designation" value="RBM27"/>
</dbReference>
<dbReference type="HPA" id="ENSG00000091009">
    <property type="expression patterns" value="Low tissue specificity"/>
</dbReference>
<dbReference type="MIM" id="620082">
    <property type="type" value="gene"/>
</dbReference>
<dbReference type="neXtProt" id="NX_Q9P2N5"/>
<dbReference type="OpenTargets" id="ENSG00000091009"/>
<dbReference type="PharmGKB" id="PA134925458"/>
<dbReference type="VEuPathDB" id="HostDB:ENSG00000091009"/>
<dbReference type="eggNOG" id="KOG2135">
    <property type="taxonomic scope" value="Eukaryota"/>
</dbReference>
<dbReference type="GeneTree" id="ENSGT00510000046929"/>
<dbReference type="HOGENOM" id="CLU_006190_0_0_1"/>
<dbReference type="InParanoid" id="Q9P2N5"/>
<dbReference type="OMA" id="ANAKCWQ"/>
<dbReference type="OrthoDB" id="443401at2759"/>
<dbReference type="PAN-GO" id="Q9P2N5">
    <property type="GO annotations" value="2 GO annotations based on evolutionary models"/>
</dbReference>
<dbReference type="PhylomeDB" id="Q9P2N5"/>
<dbReference type="TreeFam" id="TF319253"/>
<dbReference type="PathwayCommons" id="Q9P2N5"/>
<dbReference type="SignaLink" id="Q9P2N5"/>
<dbReference type="BioGRID-ORCS" id="54439">
    <property type="hits" value="61 hits in 1163 CRISPR screens"/>
</dbReference>
<dbReference type="CD-CODE" id="91857CE7">
    <property type="entry name" value="Nucleolus"/>
</dbReference>
<dbReference type="ChiTaRS" id="RBM27">
    <property type="organism name" value="human"/>
</dbReference>
<dbReference type="GenomeRNAi" id="54439"/>
<dbReference type="Pharos" id="Q9P2N5">
    <property type="development level" value="Tdark"/>
</dbReference>
<dbReference type="PRO" id="PR:Q9P2N5"/>
<dbReference type="Proteomes" id="UP000005640">
    <property type="component" value="Chromosome 5"/>
</dbReference>
<dbReference type="RNAct" id="Q9P2N5">
    <property type="molecule type" value="protein"/>
</dbReference>
<dbReference type="Bgee" id="ENSG00000091009">
    <property type="expression patterns" value="Expressed in caput epididymis and 194 other cell types or tissues"/>
</dbReference>
<dbReference type="GO" id="GO:0005737">
    <property type="term" value="C:cytoplasm"/>
    <property type="evidence" value="ECO:0007669"/>
    <property type="project" value="UniProtKB-SubCell"/>
</dbReference>
<dbReference type="GO" id="GO:0016607">
    <property type="term" value="C:nuclear speck"/>
    <property type="evidence" value="ECO:0007669"/>
    <property type="project" value="UniProtKB-SubCell"/>
</dbReference>
<dbReference type="GO" id="GO:0005634">
    <property type="term" value="C:nucleus"/>
    <property type="evidence" value="ECO:0000318"/>
    <property type="project" value="GO_Central"/>
</dbReference>
<dbReference type="GO" id="GO:0003723">
    <property type="term" value="F:RNA binding"/>
    <property type="evidence" value="ECO:0007005"/>
    <property type="project" value="UniProtKB"/>
</dbReference>
<dbReference type="GO" id="GO:0008270">
    <property type="term" value="F:zinc ion binding"/>
    <property type="evidence" value="ECO:0007669"/>
    <property type="project" value="UniProtKB-KW"/>
</dbReference>
<dbReference type="CDD" id="cd12517">
    <property type="entry name" value="RRM_RBM27"/>
    <property type="match status" value="1"/>
</dbReference>
<dbReference type="FunFam" id="1.20.1390.10:FF:000001">
    <property type="entry name" value="RNA-binding protein 26 isoform X2"/>
    <property type="match status" value="1"/>
</dbReference>
<dbReference type="FunFam" id="3.30.70.330:FF:000208">
    <property type="entry name" value="RNA-binding protein 27 isoform X2"/>
    <property type="match status" value="1"/>
</dbReference>
<dbReference type="Gene3D" id="3.30.70.330">
    <property type="match status" value="1"/>
</dbReference>
<dbReference type="Gene3D" id="1.20.1390.10">
    <property type="entry name" value="PWI domain"/>
    <property type="match status" value="1"/>
</dbReference>
<dbReference type="InterPro" id="IPR012677">
    <property type="entry name" value="Nucleotide-bd_a/b_plait_sf"/>
</dbReference>
<dbReference type="InterPro" id="IPR002483">
    <property type="entry name" value="PWI_dom"/>
</dbReference>
<dbReference type="InterPro" id="IPR035979">
    <property type="entry name" value="RBD_domain_sf"/>
</dbReference>
<dbReference type="InterPro" id="IPR045137">
    <property type="entry name" value="RBM26/27"/>
</dbReference>
<dbReference type="InterPro" id="IPR034451">
    <property type="entry name" value="RBM27_RRM"/>
</dbReference>
<dbReference type="InterPro" id="IPR000504">
    <property type="entry name" value="RRM_dom"/>
</dbReference>
<dbReference type="InterPro" id="IPR000571">
    <property type="entry name" value="Znf_CCCH"/>
</dbReference>
<dbReference type="PANTHER" id="PTHR14398">
    <property type="entry name" value="RNA RECOGNITION RRM/RNP DOMAIN"/>
    <property type="match status" value="1"/>
</dbReference>
<dbReference type="PANTHER" id="PTHR14398:SF1">
    <property type="entry name" value="RNA-BINDING PROTEIN 27"/>
    <property type="match status" value="1"/>
</dbReference>
<dbReference type="Pfam" id="PF01480">
    <property type="entry name" value="PWI"/>
    <property type="match status" value="1"/>
</dbReference>
<dbReference type="Pfam" id="PF00076">
    <property type="entry name" value="RRM_1"/>
    <property type="match status" value="1"/>
</dbReference>
<dbReference type="Pfam" id="PF00642">
    <property type="entry name" value="zf-CCCH"/>
    <property type="match status" value="1"/>
</dbReference>
<dbReference type="SMART" id="SM00360">
    <property type="entry name" value="RRM"/>
    <property type="match status" value="1"/>
</dbReference>
<dbReference type="SUPFAM" id="SSF54928">
    <property type="entry name" value="RNA-binding domain, RBD"/>
    <property type="match status" value="1"/>
</dbReference>
<dbReference type="PROSITE" id="PS50102">
    <property type="entry name" value="RRM"/>
    <property type="match status" value="1"/>
</dbReference>
<dbReference type="PROSITE" id="PS50103">
    <property type="entry name" value="ZF_C3H1"/>
    <property type="match status" value="1"/>
</dbReference>
<keyword id="KW-0175">Coiled coil</keyword>
<keyword id="KW-0963">Cytoplasm</keyword>
<keyword id="KW-0479">Metal-binding</keyword>
<keyword id="KW-0488">Methylation</keyword>
<keyword id="KW-0539">Nucleus</keyword>
<keyword id="KW-0597">Phosphoprotein</keyword>
<keyword id="KW-1267">Proteomics identification</keyword>
<keyword id="KW-1185">Reference proteome</keyword>
<keyword id="KW-0694">RNA-binding</keyword>
<keyword id="KW-0862">Zinc</keyword>
<keyword id="KW-0863">Zinc-finger</keyword>